<organism>
    <name type="scientific">Enterobacteria phage fr</name>
    <name type="common">Bacteriophage fr</name>
    <dbReference type="NCBI Taxonomy" id="12017"/>
    <lineage>
        <taxon>Viruses</taxon>
        <taxon>Riboviria</taxon>
        <taxon>Orthornavirae</taxon>
        <taxon>Lenarviricota</taxon>
        <taxon>Leviviricetes</taxon>
        <taxon>Norzivirales</taxon>
        <taxon>Fiersviridae</taxon>
        <taxon>Emesvirus</taxon>
        <taxon>Emesvirus zinderi</taxon>
    </lineage>
</organism>
<protein>
    <recommendedName>
        <fullName>Lysis protein</fullName>
    </recommendedName>
</protein>
<accession>P19903</accession>
<proteinExistence type="inferred from homology"/>
<feature type="chain" id="PRO_0000164861" description="Lysis protein">
    <location>
        <begin position="1"/>
        <end position="71"/>
    </location>
</feature>
<feature type="transmembrane region" description="Helical" evidence="2">
    <location>
        <begin position="34"/>
        <end position="56"/>
    </location>
</feature>
<feature type="region of interest" description="Disordered" evidence="3">
    <location>
        <begin position="1"/>
        <end position="24"/>
    </location>
</feature>
<evidence type="ECO:0000250" key="1">
    <source>
        <dbReference type="UniProtKB" id="P03609"/>
    </source>
</evidence>
<evidence type="ECO:0000255" key="2"/>
<evidence type="ECO:0000256" key="3">
    <source>
        <dbReference type="SAM" id="MobiDB-lite"/>
    </source>
</evidence>
<evidence type="ECO:0000305" key="4"/>
<sequence>MQQPSQPTRESTKKPVPFQHEEYPCQNQQRSSTLYVLICLAIFLSKFTNQLLASLLDLLIRIVTTLQQLLT</sequence>
<comment type="function">
    <text evidence="1">Induces the formation of specific membrane adhesion sites between the inner and outer membranes, apparently leading to host cell lysis. Lysis may be performed via activation of host murein hydrolases.</text>
</comment>
<comment type="subcellular location">
    <subcellularLocation>
        <location evidence="1">Host cell inner membrane</location>
        <topology evidence="2">Single-pass membrane protein</topology>
    </subcellularLocation>
    <subcellularLocation>
        <location evidence="1">Host cell outer membrane</location>
        <topology evidence="2">Single-pass membrane protein</topology>
    </subcellularLocation>
</comment>
<comment type="similarity">
    <text evidence="4">Belongs to the Leviviricetes lysis protein family.</text>
</comment>
<organismHost>
    <name type="scientific">Escherichia coli</name>
    <dbReference type="NCBI Taxonomy" id="562"/>
</organismHost>
<keyword id="KW-0204">Cytolysis</keyword>
<keyword id="KW-1030">Host cell inner membrane</keyword>
<keyword id="KW-0578">Host cell lysis by virus</keyword>
<keyword id="KW-1032">Host cell membrane</keyword>
<keyword id="KW-1033">Host cell outer membrane</keyword>
<keyword id="KW-1043">Host membrane</keyword>
<keyword id="KW-0472">Membrane</keyword>
<keyword id="KW-0812">Transmembrane</keyword>
<keyword id="KW-1133">Transmembrane helix</keyword>
<keyword id="KW-1188">Viral release from host cell</keyword>
<reference key="1">
    <citation type="journal article" date="1990" name="Biochim. Biophys. Acta">
        <title>Complete nucleotide sequence of the group I RNA bacteriophage fr.</title>
        <authorList>
            <person name="Adhin M.R."/>
            <person name="Avots A.J."/>
            <person name="Berzin V.M."/>
            <person name="Overbeek G.P."/>
            <person name="van Duin J."/>
        </authorList>
    </citation>
    <scope>NUCLEOTIDE SEQUENCE [MRNA]</scope>
</reference>
<reference key="2">
    <citation type="journal article" date="1981" name="Bioorg. Khim.">
        <title>Structure of regulator part of phage fr replicase gene.</title>
        <authorList>
            <person name="Berzin B.M."/>
            <person name="Gribanov B.A."/>
            <person name="Tsielens I.A."/>
            <person name="Yansone H.B."/>
            <person name="Gren A.Y."/>
        </authorList>
    </citation>
    <scope>NUCLEOTIDE SEQUENCE [MRNA] OF 7-35</scope>
</reference>
<name>LYS_BPFR</name>
<dbReference type="EMBL" id="X15031">
    <property type="protein sequence ID" value="CAA33137.1"/>
    <property type="molecule type" value="mRNA"/>
</dbReference>
<dbReference type="PIR" id="S08019">
    <property type="entry name" value="S08019"/>
</dbReference>
<dbReference type="SMR" id="P19903"/>
<dbReference type="Proteomes" id="UP000002582">
    <property type="component" value="Genome"/>
</dbReference>
<dbReference type="GO" id="GO:0020002">
    <property type="term" value="C:host cell plasma membrane"/>
    <property type="evidence" value="ECO:0007669"/>
    <property type="project" value="UniProtKB-SubCell"/>
</dbReference>
<dbReference type="GO" id="GO:0016020">
    <property type="term" value="C:membrane"/>
    <property type="evidence" value="ECO:0007669"/>
    <property type="project" value="UniProtKB-KW"/>
</dbReference>
<dbReference type="GO" id="GO:0031640">
    <property type="term" value="P:killing of cells of another organism"/>
    <property type="evidence" value="ECO:0007669"/>
    <property type="project" value="UniProtKB-KW"/>
</dbReference>
<dbReference type="InterPro" id="IPR022599">
    <property type="entry name" value="Phage_MS2_lysis"/>
</dbReference>
<dbReference type="Pfam" id="PF11125">
    <property type="entry name" value="Phage_MS2_lysis"/>
    <property type="match status" value="1"/>
</dbReference>